<dbReference type="EMBL" id="CP001287">
    <property type="protein sequence ID" value="ACK68079.1"/>
    <property type="molecule type" value="Genomic_DNA"/>
</dbReference>
<dbReference type="RefSeq" id="WP_015785130.1">
    <property type="nucleotide sequence ID" value="NC_011726.1"/>
</dbReference>
<dbReference type="SMR" id="B7K626"/>
<dbReference type="STRING" id="41431.PCC8801_4147"/>
<dbReference type="KEGG" id="cyp:PCC8801_4147"/>
<dbReference type="eggNOG" id="ENOG5032RR6">
    <property type="taxonomic scope" value="Bacteria"/>
</dbReference>
<dbReference type="HOGENOM" id="CLU_194095_0_0_3"/>
<dbReference type="OrthoDB" id="514620at2"/>
<dbReference type="Proteomes" id="UP000008204">
    <property type="component" value="Chromosome"/>
</dbReference>
<dbReference type="GO" id="GO:0009539">
    <property type="term" value="C:photosystem II reaction center"/>
    <property type="evidence" value="ECO:0007669"/>
    <property type="project" value="InterPro"/>
</dbReference>
<dbReference type="GO" id="GO:0031676">
    <property type="term" value="C:plasma membrane-derived thylakoid membrane"/>
    <property type="evidence" value="ECO:0007669"/>
    <property type="project" value="UniProtKB-SubCell"/>
</dbReference>
<dbReference type="GO" id="GO:0009055">
    <property type="term" value="F:electron transfer activity"/>
    <property type="evidence" value="ECO:0007669"/>
    <property type="project" value="UniProtKB-UniRule"/>
</dbReference>
<dbReference type="GO" id="GO:0020037">
    <property type="term" value="F:heme binding"/>
    <property type="evidence" value="ECO:0007669"/>
    <property type="project" value="InterPro"/>
</dbReference>
<dbReference type="GO" id="GO:0005506">
    <property type="term" value="F:iron ion binding"/>
    <property type="evidence" value="ECO:0007669"/>
    <property type="project" value="UniProtKB-UniRule"/>
</dbReference>
<dbReference type="GO" id="GO:0009767">
    <property type="term" value="P:photosynthetic electron transport chain"/>
    <property type="evidence" value="ECO:0007669"/>
    <property type="project" value="InterPro"/>
</dbReference>
<dbReference type="Gene3D" id="1.20.5.860">
    <property type="entry name" value="Photosystem II cytochrome b559, alpha subunit"/>
    <property type="match status" value="1"/>
</dbReference>
<dbReference type="HAMAP" id="MF_00642">
    <property type="entry name" value="PSII_PsbE"/>
    <property type="match status" value="1"/>
</dbReference>
<dbReference type="InterPro" id="IPR006217">
    <property type="entry name" value="PSII_cyt_b559_asu"/>
</dbReference>
<dbReference type="InterPro" id="IPR037025">
    <property type="entry name" value="PSII_cyt_b559_asu_sf"/>
</dbReference>
<dbReference type="InterPro" id="IPR006216">
    <property type="entry name" value="PSII_cyt_b559_CS"/>
</dbReference>
<dbReference type="InterPro" id="IPR013081">
    <property type="entry name" value="PSII_cyt_b559_N"/>
</dbReference>
<dbReference type="InterPro" id="IPR013082">
    <property type="entry name" value="PSII_cytb559_asu_lum"/>
</dbReference>
<dbReference type="NCBIfam" id="TIGR01332">
    <property type="entry name" value="cyt_b559_alpha"/>
    <property type="match status" value="1"/>
</dbReference>
<dbReference type="PANTHER" id="PTHR33391">
    <property type="entry name" value="CYTOCHROME B559 SUBUNIT BETA-RELATED"/>
    <property type="match status" value="1"/>
</dbReference>
<dbReference type="PANTHER" id="PTHR33391:SF9">
    <property type="entry name" value="CYTOCHROME B559 SUBUNIT BETA-RELATED"/>
    <property type="match status" value="1"/>
</dbReference>
<dbReference type="Pfam" id="PF00283">
    <property type="entry name" value="Cytochrom_B559"/>
    <property type="match status" value="1"/>
</dbReference>
<dbReference type="Pfam" id="PF00284">
    <property type="entry name" value="Cytochrom_B559a"/>
    <property type="match status" value="1"/>
</dbReference>
<dbReference type="PIRSF" id="PIRSF000036">
    <property type="entry name" value="PsbE"/>
    <property type="match status" value="1"/>
</dbReference>
<dbReference type="SUPFAM" id="SSF161045">
    <property type="entry name" value="Cytochrome b559 subunits"/>
    <property type="match status" value="1"/>
</dbReference>
<dbReference type="PROSITE" id="PS00537">
    <property type="entry name" value="CYTOCHROME_B559"/>
    <property type="match status" value="1"/>
</dbReference>
<organism>
    <name type="scientific">Rippkaea orientalis (strain PCC 8801 / RF-1)</name>
    <name type="common">Cyanothece sp. (strain PCC 8801)</name>
    <dbReference type="NCBI Taxonomy" id="41431"/>
    <lineage>
        <taxon>Bacteria</taxon>
        <taxon>Bacillati</taxon>
        <taxon>Cyanobacteriota</taxon>
        <taxon>Cyanophyceae</taxon>
        <taxon>Oscillatoriophycideae</taxon>
        <taxon>Chroococcales</taxon>
        <taxon>Aphanothecaceae</taxon>
        <taxon>Rippkaea</taxon>
        <taxon>Rippkaea orientalis</taxon>
    </lineage>
</organism>
<accession>B7K626</accession>
<feature type="chain" id="PRO_1000130899" description="Cytochrome b559 subunit alpha">
    <location>
        <begin position="1"/>
        <end position="81"/>
    </location>
</feature>
<feature type="transmembrane region" description="Helical" evidence="1">
    <location>
        <begin position="21"/>
        <end position="35"/>
    </location>
</feature>
<feature type="binding site" description="axial binding residue" evidence="1">
    <location>
        <position position="23"/>
    </location>
    <ligand>
        <name>heme</name>
        <dbReference type="ChEBI" id="CHEBI:30413"/>
        <note>ligand shared with beta subunit</note>
    </ligand>
    <ligandPart>
        <name>Fe</name>
        <dbReference type="ChEBI" id="CHEBI:18248"/>
    </ligandPart>
</feature>
<keyword id="KW-0249">Electron transport</keyword>
<keyword id="KW-0349">Heme</keyword>
<keyword id="KW-0408">Iron</keyword>
<keyword id="KW-0472">Membrane</keyword>
<keyword id="KW-0479">Metal-binding</keyword>
<keyword id="KW-0602">Photosynthesis</keyword>
<keyword id="KW-0604">Photosystem II</keyword>
<keyword id="KW-1185">Reference proteome</keyword>
<keyword id="KW-0793">Thylakoid</keyword>
<keyword id="KW-0812">Transmembrane</keyword>
<keyword id="KW-1133">Transmembrane helix</keyword>
<keyword id="KW-0813">Transport</keyword>
<evidence type="ECO:0000255" key="1">
    <source>
        <dbReference type="HAMAP-Rule" id="MF_00642"/>
    </source>
</evidence>
<reference key="1">
    <citation type="journal article" date="2011" name="MBio">
        <title>Novel metabolic attributes of the genus Cyanothece, comprising a group of unicellular nitrogen-fixing Cyanobacteria.</title>
        <authorList>
            <person name="Bandyopadhyay A."/>
            <person name="Elvitigala T."/>
            <person name="Welsh E."/>
            <person name="Stockel J."/>
            <person name="Liberton M."/>
            <person name="Min H."/>
            <person name="Sherman L.A."/>
            <person name="Pakrasi H.B."/>
        </authorList>
    </citation>
    <scope>NUCLEOTIDE SEQUENCE [LARGE SCALE GENOMIC DNA]</scope>
    <source>
        <strain>PCC 8801 / RF-1</strain>
    </source>
</reference>
<name>PSBE_RIPO1</name>
<protein>
    <recommendedName>
        <fullName evidence="1">Cytochrome b559 subunit alpha</fullName>
    </recommendedName>
    <alternativeName>
        <fullName evidence="1">PSII reaction center subunit V</fullName>
    </alternativeName>
</protein>
<gene>
    <name evidence="1" type="primary">psbE</name>
    <name type="ordered locus">PCC8801_4147</name>
</gene>
<comment type="function">
    <text evidence="1">This b-type cytochrome is tightly associated with the reaction center of photosystem II (PSII). PSII is a light-driven water:plastoquinone oxidoreductase that uses light energy to abstract electrons from H(2)O, generating O(2) and a proton gradient subsequently used for ATP formation. It consists of a core antenna complex that captures photons, and an electron transfer chain that converts photonic excitation into a charge separation.</text>
</comment>
<comment type="cofactor">
    <cofactor evidence="1">
        <name>heme b</name>
        <dbReference type="ChEBI" id="CHEBI:60344"/>
    </cofactor>
    <text evidence="1">With its partner (PsbF) binds heme. PSII binds additional chlorophylls, carotenoids and specific lipids.</text>
</comment>
<comment type="subunit">
    <text evidence="1">Heterodimer of an alpha subunit and a beta subunit. PSII is composed of 1 copy each of membrane proteins PsbA, PsbB, PsbC, PsbD, PsbE, PsbF, PsbH, PsbI, PsbJ, PsbK, PsbL, PsbM, PsbT, PsbX, PsbY, PsbZ, Psb30/Ycf12, peripheral proteins PsbO, CyanoQ (PsbQ), PsbU, PsbV and a large number of cofactors. It forms dimeric complexes.</text>
</comment>
<comment type="subcellular location">
    <subcellularLocation>
        <location evidence="1">Cellular thylakoid membrane</location>
        <topology evidence="1">Single-pass membrane protein</topology>
    </subcellularLocation>
</comment>
<comment type="similarity">
    <text evidence="1">Belongs to the PsbE/PsbF family.</text>
</comment>
<sequence length="81" mass="9378">MSGSTGERPFSDIVTSIRYWVIHSITIPMLFIAGWLFVSTGLAYDVFGTPRPDQYFTQERQELPIISDRYKASQQIQEFNK</sequence>
<proteinExistence type="inferred from homology"/>